<name>ACCO1_SOLLC</name>
<comment type="catalytic activity">
    <reaction>
        <text>1-aminocyclopropane-1-carboxylate + L-ascorbate + O2 = ethene + L-dehydroascorbate + hydrogen cyanide + CO2 + 2 H2O</text>
        <dbReference type="Rhea" id="RHEA:23640"/>
        <dbReference type="ChEBI" id="CHEBI:15377"/>
        <dbReference type="ChEBI" id="CHEBI:15379"/>
        <dbReference type="ChEBI" id="CHEBI:16526"/>
        <dbReference type="ChEBI" id="CHEBI:18153"/>
        <dbReference type="ChEBI" id="CHEBI:18407"/>
        <dbReference type="ChEBI" id="CHEBI:38290"/>
        <dbReference type="ChEBI" id="CHEBI:58360"/>
        <dbReference type="ChEBI" id="CHEBI:58539"/>
        <dbReference type="EC" id="1.14.17.4"/>
    </reaction>
</comment>
<comment type="cofactor">
    <cofactor>
        <name>Fe cation</name>
        <dbReference type="ChEBI" id="CHEBI:24875"/>
    </cofactor>
</comment>
<comment type="pathway">
    <text>Alkene biosynthesis; ethylene biosynthesis via S-adenosyl-L-methionine; ethylene from S-adenosyl-L-methionine: step 2/2.</text>
</comment>
<comment type="tissue specificity">
    <text>Predominantly expressed in the petals and the stigma and style.</text>
</comment>
<comment type="developmental stage">
    <text>Expressed during fruit ripening.</text>
</comment>
<comment type="similarity">
    <text evidence="2">Belongs to the iron/ascorbate-dependent oxidoreductase family.</text>
</comment>
<protein>
    <recommendedName>
        <fullName>1-aminocyclopropane-1-carboxylate oxidase 1</fullName>
        <shortName>ACC oxidase 1</shortName>
        <ecNumber>1.14.17.4</ecNumber>
    </recommendedName>
    <alternativeName>
        <fullName>Ethylene-forming enzyme</fullName>
        <shortName>EFE</shortName>
    </alternativeName>
    <alternativeName>
        <fullName>Protein pTOM 13</fullName>
    </alternativeName>
</protein>
<proteinExistence type="evidence at transcript level"/>
<accession>P05116</accession>
<dbReference type="EC" id="1.14.17.4"/>
<dbReference type="EMBL" id="X58273">
    <property type="protein sequence ID" value="CAA41212.1"/>
    <property type="molecule type" value="Genomic_DNA"/>
</dbReference>
<dbReference type="EMBL" id="X04792">
    <property type="protein sequence ID" value="CAA28479.1"/>
    <property type="molecule type" value="mRNA"/>
</dbReference>
<dbReference type="PIR" id="S16591">
    <property type="entry name" value="S16591"/>
</dbReference>
<dbReference type="RefSeq" id="NP_001234024.2">
    <property type="nucleotide sequence ID" value="NM_001247095.2"/>
</dbReference>
<dbReference type="SMR" id="P05116"/>
<dbReference type="FunCoup" id="P05116">
    <property type="interactions" value="171"/>
</dbReference>
<dbReference type="STRING" id="4081.P05116"/>
<dbReference type="PaxDb" id="4081-Solyc07g049530.2.1"/>
<dbReference type="EnsemblPlants" id="Solyc07g049530.3.1">
    <property type="protein sequence ID" value="Solyc07g049530.3.1"/>
    <property type="gene ID" value="Solyc07g049530.3"/>
</dbReference>
<dbReference type="GeneID" id="544052"/>
<dbReference type="Gramene" id="Solyc07g049530.3.1">
    <property type="protein sequence ID" value="Solyc07g049530.3.1"/>
    <property type="gene ID" value="Solyc07g049530.3"/>
</dbReference>
<dbReference type="KEGG" id="sly:544052"/>
<dbReference type="eggNOG" id="KOG0143">
    <property type="taxonomic scope" value="Eukaryota"/>
</dbReference>
<dbReference type="HOGENOM" id="CLU_010119_16_1_1"/>
<dbReference type="InParanoid" id="P05116"/>
<dbReference type="OMA" id="RANTMEM"/>
<dbReference type="OrthoDB" id="288590at2759"/>
<dbReference type="PhylomeDB" id="P05116"/>
<dbReference type="BRENDA" id="1.14.17.4">
    <property type="organism ID" value="3101"/>
</dbReference>
<dbReference type="UniPathway" id="UPA00384">
    <property type="reaction ID" value="UER00563"/>
</dbReference>
<dbReference type="Proteomes" id="UP000004994">
    <property type="component" value="Chromosome 7"/>
</dbReference>
<dbReference type="ExpressionAtlas" id="P05116">
    <property type="expression patterns" value="baseline and differential"/>
</dbReference>
<dbReference type="GO" id="GO:0009815">
    <property type="term" value="F:1-aminocyclopropane-1-carboxylate oxidase activity"/>
    <property type="evidence" value="ECO:0007669"/>
    <property type="project" value="UniProtKB-EC"/>
</dbReference>
<dbReference type="GO" id="GO:0016706">
    <property type="term" value="F:2-oxoglutarate-dependent dioxygenase activity"/>
    <property type="evidence" value="ECO:0000318"/>
    <property type="project" value="GO_Central"/>
</dbReference>
<dbReference type="GO" id="GO:0031418">
    <property type="term" value="F:L-ascorbic acid binding"/>
    <property type="evidence" value="ECO:0007669"/>
    <property type="project" value="UniProtKB-KW"/>
</dbReference>
<dbReference type="GO" id="GO:0046872">
    <property type="term" value="F:metal ion binding"/>
    <property type="evidence" value="ECO:0007669"/>
    <property type="project" value="UniProtKB-KW"/>
</dbReference>
<dbReference type="GO" id="GO:0009805">
    <property type="term" value="P:coumarin biosynthetic process"/>
    <property type="evidence" value="ECO:0007669"/>
    <property type="project" value="UniProtKB-ARBA"/>
</dbReference>
<dbReference type="GO" id="GO:0009693">
    <property type="term" value="P:ethylene biosynthetic process"/>
    <property type="evidence" value="ECO:0007669"/>
    <property type="project" value="UniProtKB-UniPathway"/>
</dbReference>
<dbReference type="GO" id="GO:0009835">
    <property type="term" value="P:fruit ripening"/>
    <property type="evidence" value="ECO:0007669"/>
    <property type="project" value="UniProtKB-KW"/>
</dbReference>
<dbReference type="GO" id="GO:0002238">
    <property type="term" value="P:response to molecule of fungal origin"/>
    <property type="evidence" value="ECO:0007669"/>
    <property type="project" value="UniProtKB-ARBA"/>
</dbReference>
<dbReference type="FunFam" id="2.60.120.330:FF:000002">
    <property type="entry name" value="1-aminocyclopropane-1-carboxylate oxidase 1"/>
    <property type="match status" value="1"/>
</dbReference>
<dbReference type="Gene3D" id="2.60.120.330">
    <property type="entry name" value="B-lactam Antibiotic, Isopenicillin N Synthase, Chain"/>
    <property type="match status" value="1"/>
</dbReference>
<dbReference type="InterPro" id="IPR026992">
    <property type="entry name" value="DIOX_N"/>
</dbReference>
<dbReference type="InterPro" id="IPR044861">
    <property type="entry name" value="IPNS-like_FE2OG_OXY"/>
</dbReference>
<dbReference type="InterPro" id="IPR027443">
    <property type="entry name" value="IPNS-like_sf"/>
</dbReference>
<dbReference type="InterPro" id="IPR005123">
    <property type="entry name" value="Oxoglu/Fe-dep_dioxygenase_dom"/>
</dbReference>
<dbReference type="InterPro" id="IPR050295">
    <property type="entry name" value="Plant_2OG-oxidoreductases"/>
</dbReference>
<dbReference type="PANTHER" id="PTHR47991">
    <property type="entry name" value="OXOGLUTARATE/IRON-DEPENDENT DIOXYGENASE"/>
    <property type="match status" value="1"/>
</dbReference>
<dbReference type="Pfam" id="PF03171">
    <property type="entry name" value="2OG-FeII_Oxy"/>
    <property type="match status" value="1"/>
</dbReference>
<dbReference type="Pfam" id="PF14226">
    <property type="entry name" value="DIOX_N"/>
    <property type="match status" value="1"/>
</dbReference>
<dbReference type="SUPFAM" id="SSF51197">
    <property type="entry name" value="Clavaminate synthase-like"/>
    <property type="match status" value="1"/>
</dbReference>
<dbReference type="PROSITE" id="PS51471">
    <property type="entry name" value="FE2OG_OXY"/>
    <property type="match status" value="1"/>
</dbReference>
<gene>
    <name type="primary">ACO1</name>
    <name type="synonym">ETH1</name>
</gene>
<keyword id="KW-0266">Ethylene biosynthesis</keyword>
<keyword id="KW-0292">Fruit ripening</keyword>
<keyword id="KW-0408">Iron</keyword>
<keyword id="KW-0479">Metal-binding</keyword>
<keyword id="KW-0560">Oxidoreductase</keyword>
<keyword id="KW-1185">Reference proteome</keyword>
<keyword id="KW-0847">Vitamin C</keyword>
<organism>
    <name type="scientific">Solanum lycopersicum</name>
    <name type="common">Tomato</name>
    <name type="synonym">Lycopersicon esculentum</name>
    <dbReference type="NCBI Taxonomy" id="4081"/>
    <lineage>
        <taxon>Eukaryota</taxon>
        <taxon>Viridiplantae</taxon>
        <taxon>Streptophyta</taxon>
        <taxon>Embryophyta</taxon>
        <taxon>Tracheophyta</taxon>
        <taxon>Spermatophyta</taxon>
        <taxon>Magnoliopsida</taxon>
        <taxon>eudicotyledons</taxon>
        <taxon>Gunneridae</taxon>
        <taxon>Pentapetalae</taxon>
        <taxon>asterids</taxon>
        <taxon>lamiids</taxon>
        <taxon>Solanales</taxon>
        <taxon>Solanaceae</taxon>
        <taxon>Solanoideae</taxon>
        <taxon>Solaneae</taxon>
        <taxon>Solanum</taxon>
        <taxon>Solanum subgen. Lycopersicon</taxon>
    </lineage>
</organism>
<sequence length="315" mass="35813">MENFPIINLEKLNGDERANTMEMIKDACENWGFFELVNHGIPHEVMDTVEKMTKGHYKKCMEQRFKELVASKGLEAVQAEVTDLDWESTFFLRHLPTSNISQVPDLDEEYREVMRDFAKRLEKLAEELLDLLCENLGLEKGYLKNAFYGSKGPNFGTKVSNYPPCPKPDLIKGLRAHTDAGGIILLFQDDKVSGLQLLKDEQWIDVPPMRHSIVVNLGDQLEVITNGKYKSVLHRVIAQTDGTRMSLASFYNPGSDAVIYPAKTLVEKEAEESTQVYPKFVFDDYMKLYAGLKFQAKEPRFEAMKAMESDPIASA</sequence>
<reference key="1">
    <citation type="journal article" date="1991" name="Plant Mol. Biol.">
        <title>eth1, a gene involved in ethylene synthesis in tomato.</title>
        <authorList>
            <person name="Koeck M."/>
            <person name="Hamilton A.J."/>
            <person name="Grierson D."/>
        </authorList>
    </citation>
    <scope>NUCLEOTIDE SEQUENCE [GENOMIC DNA]</scope>
    <source>
        <strain>cv. Ailsa Craig</strain>
    </source>
</reference>
<reference key="2">
    <citation type="journal article" date="1987" name="Nucleic Acids Res.">
        <title>Structure and expression of an ethylene-related mRNA from tomato.</title>
        <authorList>
            <person name="Holdsworth M.J."/>
            <person name="Bird C.R."/>
            <person name="Ray J."/>
            <person name="Schuch W."/>
            <person name="Grierson D."/>
        </authorList>
    </citation>
    <scope>NUCLEOTIDE SEQUENCE [MRNA] OF 21-315</scope>
    <source>
        <strain>cv. Ailsa Craig</strain>
    </source>
</reference>
<feature type="chain" id="PRO_0000067261" description="1-aminocyclopropane-1-carboxylate oxidase 1">
    <location>
        <begin position="1"/>
        <end position="315"/>
    </location>
</feature>
<feature type="domain" description="Fe2OG dioxygenase" evidence="1">
    <location>
        <begin position="153"/>
        <end position="253"/>
    </location>
</feature>
<feature type="binding site" evidence="1">
    <location>
        <position position="177"/>
    </location>
    <ligand>
        <name>Fe cation</name>
        <dbReference type="ChEBI" id="CHEBI:24875"/>
    </ligand>
</feature>
<feature type="binding site" evidence="1">
    <location>
        <position position="179"/>
    </location>
    <ligand>
        <name>Fe cation</name>
        <dbReference type="ChEBI" id="CHEBI:24875"/>
    </ligand>
</feature>
<feature type="binding site" evidence="1">
    <location>
        <position position="234"/>
    </location>
    <ligand>
        <name>Fe cation</name>
        <dbReference type="ChEBI" id="CHEBI:24875"/>
    </ligand>
</feature>
<evidence type="ECO:0000255" key="1">
    <source>
        <dbReference type="PROSITE-ProRule" id="PRU00805"/>
    </source>
</evidence>
<evidence type="ECO:0000305" key="2"/>